<dbReference type="EC" id="2.1.2.9" evidence="1"/>
<dbReference type="EMBL" id="AM889285">
    <property type="protein sequence ID" value="CAP56071.1"/>
    <property type="molecule type" value="Genomic_DNA"/>
</dbReference>
<dbReference type="EMBL" id="CP001189">
    <property type="protein sequence ID" value="ACI50143.1"/>
    <property type="molecule type" value="Genomic_DNA"/>
</dbReference>
<dbReference type="RefSeq" id="WP_012225916.1">
    <property type="nucleotide sequence ID" value="NC_010125.1"/>
</dbReference>
<dbReference type="RefSeq" id="WP_012553076.1">
    <property type="nucleotide sequence ID" value="NC_011365.1"/>
</dbReference>
<dbReference type="SMR" id="A9HKQ4"/>
<dbReference type="STRING" id="272568.GDI2128"/>
<dbReference type="KEGG" id="gdi:GDI2128"/>
<dbReference type="KEGG" id="gdj:Gdia_0347"/>
<dbReference type="eggNOG" id="COG0223">
    <property type="taxonomic scope" value="Bacteria"/>
</dbReference>
<dbReference type="HOGENOM" id="CLU_033347_1_2_5"/>
<dbReference type="OrthoDB" id="9802815at2"/>
<dbReference type="Proteomes" id="UP000001176">
    <property type="component" value="Chromosome"/>
</dbReference>
<dbReference type="GO" id="GO:0005829">
    <property type="term" value="C:cytosol"/>
    <property type="evidence" value="ECO:0007669"/>
    <property type="project" value="TreeGrafter"/>
</dbReference>
<dbReference type="GO" id="GO:0004479">
    <property type="term" value="F:methionyl-tRNA formyltransferase activity"/>
    <property type="evidence" value="ECO:0007669"/>
    <property type="project" value="UniProtKB-UniRule"/>
</dbReference>
<dbReference type="CDD" id="cd08646">
    <property type="entry name" value="FMT_core_Met-tRNA-FMT_N"/>
    <property type="match status" value="1"/>
</dbReference>
<dbReference type="CDD" id="cd08704">
    <property type="entry name" value="Met_tRNA_FMT_C"/>
    <property type="match status" value="1"/>
</dbReference>
<dbReference type="Gene3D" id="3.10.25.10">
    <property type="entry name" value="Formyl transferase, C-terminal domain"/>
    <property type="match status" value="1"/>
</dbReference>
<dbReference type="Gene3D" id="3.40.50.170">
    <property type="entry name" value="Formyl transferase, N-terminal domain"/>
    <property type="match status" value="1"/>
</dbReference>
<dbReference type="HAMAP" id="MF_00182">
    <property type="entry name" value="Formyl_trans"/>
    <property type="match status" value="1"/>
</dbReference>
<dbReference type="InterPro" id="IPR005794">
    <property type="entry name" value="Fmt"/>
</dbReference>
<dbReference type="InterPro" id="IPR005793">
    <property type="entry name" value="Formyl_trans_C"/>
</dbReference>
<dbReference type="InterPro" id="IPR037022">
    <property type="entry name" value="Formyl_trans_C_sf"/>
</dbReference>
<dbReference type="InterPro" id="IPR002376">
    <property type="entry name" value="Formyl_transf_N"/>
</dbReference>
<dbReference type="InterPro" id="IPR036477">
    <property type="entry name" value="Formyl_transf_N_sf"/>
</dbReference>
<dbReference type="InterPro" id="IPR011034">
    <property type="entry name" value="Formyl_transferase-like_C_sf"/>
</dbReference>
<dbReference type="InterPro" id="IPR001555">
    <property type="entry name" value="GART_AS"/>
</dbReference>
<dbReference type="InterPro" id="IPR044135">
    <property type="entry name" value="Met-tRNA-FMT_C"/>
</dbReference>
<dbReference type="InterPro" id="IPR041711">
    <property type="entry name" value="Met-tRNA-FMT_N"/>
</dbReference>
<dbReference type="NCBIfam" id="TIGR00460">
    <property type="entry name" value="fmt"/>
    <property type="match status" value="1"/>
</dbReference>
<dbReference type="PANTHER" id="PTHR11138">
    <property type="entry name" value="METHIONYL-TRNA FORMYLTRANSFERASE"/>
    <property type="match status" value="1"/>
</dbReference>
<dbReference type="PANTHER" id="PTHR11138:SF5">
    <property type="entry name" value="METHIONYL-TRNA FORMYLTRANSFERASE, MITOCHONDRIAL"/>
    <property type="match status" value="1"/>
</dbReference>
<dbReference type="Pfam" id="PF02911">
    <property type="entry name" value="Formyl_trans_C"/>
    <property type="match status" value="1"/>
</dbReference>
<dbReference type="Pfam" id="PF00551">
    <property type="entry name" value="Formyl_trans_N"/>
    <property type="match status" value="1"/>
</dbReference>
<dbReference type="SUPFAM" id="SSF50486">
    <property type="entry name" value="FMT C-terminal domain-like"/>
    <property type="match status" value="1"/>
</dbReference>
<dbReference type="SUPFAM" id="SSF53328">
    <property type="entry name" value="Formyltransferase"/>
    <property type="match status" value="1"/>
</dbReference>
<dbReference type="PROSITE" id="PS00373">
    <property type="entry name" value="GART"/>
    <property type="match status" value="1"/>
</dbReference>
<gene>
    <name evidence="1" type="primary">fmt</name>
    <name type="ordered locus">GDI2128</name>
    <name type="ordered locus">Gdia_0347</name>
</gene>
<accession>A9HKQ4</accession>
<accession>B5ZLL4</accession>
<sequence>MRLAFMGTPDFAVPALHALHEAGHEIAVVYSQPPRPAGRGQAVRPQPVHLAAEALGIPVRVPTRLRANHDEHAFFRALDLDAAVVAAYGLILPGAMLTPRAGARLNVHASLLPRWRGAAPIQAAILAGDDESGVTIMQMDEGLDTGAMLLTGRVALTPATTASTLHDDLAAMGGRLIVAALANSETAAIPQPAEGATYAARLTREDGRIDWTRDAVDIDRQVRALTPWPGTFTTLDGTVLKIGAATPIDGPRDAVPGTVLDDRLTVACGQGTLRLTRIQRPGRGMMEADAFLRGQPVPVGTRLGS</sequence>
<proteinExistence type="inferred from homology"/>
<evidence type="ECO:0000255" key="1">
    <source>
        <dbReference type="HAMAP-Rule" id="MF_00182"/>
    </source>
</evidence>
<evidence type="ECO:0000305" key="2"/>
<name>FMT_GLUDA</name>
<feature type="chain" id="PRO_1000077302" description="Methionyl-tRNA formyltransferase">
    <location>
        <begin position="1"/>
        <end position="305"/>
    </location>
</feature>
<feature type="binding site" evidence="1">
    <location>
        <begin position="110"/>
        <end position="113"/>
    </location>
    <ligand>
        <name>(6S)-5,6,7,8-tetrahydrofolate</name>
        <dbReference type="ChEBI" id="CHEBI:57453"/>
    </ligand>
</feature>
<feature type="sequence conflict" description="In Ref. 2; ACI50143." evidence="2" ref="2">
    <original>TPRAGAR</original>
    <variation>DAPRRGC</variation>
    <location>
        <begin position="98"/>
        <end position="104"/>
    </location>
</feature>
<organism>
    <name type="scientific">Gluconacetobacter diazotrophicus (strain ATCC 49037 / DSM 5601 / CCUG 37298 / CIP 103539 / LMG 7603 / PAl5)</name>
    <dbReference type="NCBI Taxonomy" id="272568"/>
    <lineage>
        <taxon>Bacteria</taxon>
        <taxon>Pseudomonadati</taxon>
        <taxon>Pseudomonadota</taxon>
        <taxon>Alphaproteobacteria</taxon>
        <taxon>Acetobacterales</taxon>
        <taxon>Acetobacteraceae</taxon>
        <taxon>Gluconacetobacter</taxon>
    </lineage>
</organism>
<comment type="function">
    <text evidence="1">Attaches a formyl group to the free amino group of methionyl-tRNA(fMet). The formyl group appears to play a dual role in the initiator identity of N-formylmethionyl-tRNA by promoting its recognition by IF2 and preventing the misappropriation of this tRNA by the elongation apparatus.</text>
</comment>
<comment type="catalytic activity">
    <reaction evidence="1">
        <text>L-methionyl-tRNA(fMet) + (6R)-10-formyltetrahydrofolate = N-formyl-L-methionyl-tRNA(fMet) + (6S)-5,6,7,8-tetrahydrofolate + H(+)</text>
        <dbReference type="Rhea" id="RHEA:24380"/>
        <dbReference type="Rhea" id="RHEA-COMP:9952"/>
        <dbReference type="Rhea" id="RHEA-COMP:9953"/>
        <dbReference type="ChEBI" id="CHEBI:15378"/>
        <dbReference type="ChEBI" id="CHEBI:57453"/>
        <dbReference type="ChEBI" id="CHEBI:78530"/>
        <dbReference type="ChEBI" id="CHEBI:78844"/>
        <dbReference type="ChEBI" id="CHEBI:195366"/>
        <dbReference type="EC" id="2.1.2.9"/>
    </reaction>
</comment>
<comment type="similarity">
    <text evidence="1">Belongs to the Fmt family.</text>
</comment>
<protein>
    <recommendedName>
        <fullName evidence="1">Methionyl-tRNA formyltransferase</fullName>
        <ecNumber evidence="1">2.1.2.9</ecNumber>
    </recommendedName>
</protein>
<reference key="1">
    <citation type="journal article" date="2009" name="BMC Genomics">
        <title>Complete genome sequence of the sugarcane nitrogen-fixing endophyte Gluconacetobacter diazotrophicus Pal5.</title>
        <authorList>
            <person name="Bertalan M."/>
            <person name="Albano R."/>
            <person name="de Padua V."/>
            <person name="Rouws L."/>
            <person name="Rojas C."/>
            <person name="Hemerly A."/>
            <person name="Teixeira K."/>
            <person name="Schwab S."/>
            <person name="Araujo J."/>
            <person name="Oliveira A."/>
            <person name="Franca L."/>
            <person name="Magalhaes V."/>
            <person name="Alqueres S."/>
            <person name="Cardoso A."/>
            <person name="Almeida W."/>
            <person name="Loureiro M.M."/>
            <person name="Nogueira E."/>
            <person name="Cidade D."/>
            <person name="Oliveira D."/>
            <person name="Simao T."/>
            <person name="Macedo J."/>
            <person name="Valadao A."/>
            <person name="Dreschsel M."/>
            <person name="Freitas F."/>
            <person name="Vidal M."/>
            <person name="Guedes H."/>
            <person name="Rodrigues E."/>
            <person name="Meneses C."/>
            <person name="Brioso P."/>
            <person name="Pozzer L."/>
            <person name="Figueiredo D."/>
            <person name="Montano H."/>
            <person name="Junior J."/>
            <person name="de Souza Filho G."/>
            <person name="Martin Quintana Flores V."/>
            <person name="Ferreira B."/>
            <person name="Branco A."/>
            <person name="Gonzalez P."/>
            <person name="Guillobel H."/>
            <person name="Lemos M."/>
            <person name="Seibel L."/>
            <person name="Macedo J."/>
            <person name="Alves-Ferreira M."/>
            <person name="Sachetto-Martins G."/>
            <person name="Coelho A."/>
            <person name="Santos E."/>
            <person name="Amaral G."/>
            <person name="Neves A."/>
            <person name="Pacheco A.B."/>
            <person name="Carvalho D."/>
            <person name="Lery L."/>
            <person name="Bisch P."/>
            <person name="Rossle S.C."/>
            <person name="Urmenyi T."/>
            <person name="Rael Pereira A."/>
            <person name="Silva R."/>
            <person name="Rondinelli E."/>
            <person name="von Kruger W."/>
            <person name="Martins O."/>
            <person name="Baldani J.I."/>
            <person name="Ferreira P.C."/>
        </authorList>
    </citation>
    <scope>NUCLEOTIDE SEQUENCE [LARGE SCALE GENOMIC DNA]</scope>
    <source>
        <strain>ATCC 49037 / DSM 5601 / CCUG 37298 / CIP 103539 / LMG 7603 / PAl5</strain>
    </source>
</reference>
<reference key="2">
    <citation type="journal article" date="2010" name="Stand. Genomic Sci.">
        <title>Two genome sequences of the same bacterial strain, Gluconacetobacter diazotrophicus PAl 5, suggest a new standard in genome sequence submission.</title>
        <authorList>
            <person name="Giongo A."/>
            <person name="Tyler H.L."/>
            <person name="Zipperer U.N."/>
            <person name="Triplett E.W."/>
        </authorList>
    </citation>
    <scope>NUCLEOTIDE SEQUENCE [LARGE SCALE GENOMIC DNA]</scope>
    <source>
        <strain>ATCC 49037 / DSM 5601 / CCUG 37298 / CIP 103539 / LMG 7603 / PAl5</strain>
    </source>
</reference>
<keyword id="KW-0648">Protein biosynthesis</keyword>
<keyword id="KW-1185">Reference proteome</keyword>
<keyword id="KW-0808">Transferase</keyword>